<proteinExistence type="inferred from homology"/>
<sequence>MDDSRKAYVVAQDLHNAIMQRDAITISEITGRYVSGYREKIALAFMEQYNVLPADLFKEWGTGYFESLMIRCWTNRHEARAKMLKEAIRGALDRDALVDLVILCSTDDWASTLVHYQKHFRIALKADIRLNMPADRPWKALIDRWMEHDRHYRNNVKTDAHMLLQALEGGNGAAIVDILVTTKPQEWEKIVAAYEEHTNKSLETAICMAFPGFEQTAFCAAHYWLCEPSKAAAFLIHRACEGKRGDFRRVCRITSLVLDQCLKCKYVYSVYGHLAADFRKTFSDNTAIPLISLWRAYDIGKILAEKHENIT</sequence>
<comment type="function">
    <text evidence="1">Giardins are involved in parasite attachment to the intestinal mucosa and in the cytoskeletal disassembly and reassembly that marks the transition from infectious trophozoite to transmissible cyst. They may interact with other cytoskeletal proteins such as microtubules in the microribbons or crossbridges, to maintain the integrity of the ventral disk (By similarity).</text>
</comment>
<comment type="subcellular location">
    <subcellularLocation>
        <location evidence="1">Cytoplasm</location>
        <location evidence="1">Cytoskeleton</location>
    </subcellularLocation>
</comment>
<comment type="similarity">
    <text evidence="2">Belongs to the annexin family. Giardin subunit alpha subfamily.</text>
</comment>
<protein>
    <recommendedName>
        <fullName>Giardin subunit alpha-8</fullName>
    </recommendedName>
</protein>
<feature type="chain" id="PRO_0000288030" description="Giardin subunit alpha-8">
    <location>
        <begin position="1"/>
        <end position="311"/>
    </location>
</feature>
<feature type="repeat" description="Annexin 1" evidence="2">
    <location>
        <begin position="5"/>
        <end position="73"/>
    </location>
</feature>
<feature type="repeat" description="Annexin 2" evidence="2">
    <location>
        <begin position="75"/>
        <end position="146"/>
    </location>
</feature>
<feature type="repeat" description="Annexin 3" evidence="2">
    <location>
        <begin position="154"/>
        <end position="223"/>
    </location>
</feature>
<feature type="repeat" description="Annexin 4" evidence="2">
    <location>
        <begin position="227"/>
        <end position="295"/>
    </location>
</feature>
<reference key="1">
    <citation type="journal article" date="2005" name="Int. J. Parasitol.">
        <title>Annexin-like alpha giardins: a new cytoskeletal gene family in Giardia lamblia.</title>
        <authorList>
            <person name="Weiland M.E.-L."/>
            <person name="McArthur A.G."/>
            <person name="Morrison H.G."/>
            <person name="Sogin M.L."/>
            <person name="Svard S.G."/>
        </authorList>
    </citation>
    <scope>NUCLEOTIDE SEQUENCE [GENOMIC DNA]</scope>
    <source>
        <strain>ATCC 50803 / WB-C6</strain>
    </source>
</reference>
<keyword id="KW-0041">Annexin</keyword>
<keyword id="KW-0963">Cytoplasm</keyword>
<keyword id="KW-0206">Cytoskeleton</keyword>
<keyword id="KW-0493">Microtubule</keyword>
<keyword id="KW-0677">Repeat</keyword>
<accession>Q4VPP9</accession>
<name>GIA8_GIAIN</name>
<dbReference type="EMBL" id="AY781323">
    <property type="protein sequence ID" value="AAX07974.1"/>
    <property type="molecule type" value="Genomic_DNA"/>
</dbReference>
<dbReference type="RefSeq" id="XP_001704306.1">
    <property type="nucleotide sequence ID" value="XM_001704254.1"/>
</dbReference>
<dbReference type="SMR" id="Q4VPP9"/>
<dbReference type="GeneID" id="5697158"/>
<dbReference type="KEGG" id="gla:GL50803_0011649"/>
<dbReference type="VEuPathDB" id="GiardiaDB:DHA2_11649"/>
<dbReference type="VEuPathDB" id="GiardiaDB:GL50581_2211"/>
<dbReference type="VEuPathDB" id="GiardiaDB:GL50803_0011649"/>
<dbReference type="VEuPathDB" id="GiardiaDB:QR46_3705"/>
<dbReference type="OrthoDB" id="37886at2759"/>
<dbReference type="GO" id="GO:0005737">
    <property type="term" value="C:cytoplasm"/>
    <property type="evidence" value="ECO:0007669"/>
    <property type="project" value="UniProtKB-KW"/>
</dbReference>
<dbReference type="GO" id="GO:0005874">
    <property type="term" value="C:microtubule"/>
    <property type="evidence" value="ECO:0007669"/>
    <property type="project" value="UniProtKB-KW"/>
</dbReference>
<dbReference type="GO" id="GO:0005886">
    <property type="term" value="C:plasma membrane"/>
    <property type="evidence" value="ECO:0007669"/>
    <property type="project" value="TreeGrafter"/>
</dbReference>
<dbReference type="GO" id="GO:0005509">
    <property type="term" value="F:calcium ion binding"/>
    <property type="evidence" value="ECO:0007669"/>
    <property type="project" value="InterPro"/>
</dbReference>
<dbReference type="GO" id="GO:0005544">
    <property type="term" value="F:calcium-dependent phospholipid binding"/>
    <property type="evidence" value="ECO:0007669"/>
    <property type="project" value="InterPro"/>
</dbReference>
<dbReference type="GO" id="GO:0001786">
    <property type="term" value="F:phosphatidylserine binding"/>
    <property type="evidence" value="ECO:0007669"/>
    <property type="project" value="TreeGrafter"/>
</dbReference>
<dbReference type="GO" id="GO:0007010">
    <property type="term" value="P:cytoskeleton organization"/>
    <property type="evidence" value="ECO:0007669"/>
    <property type="project" value="InterPro"/>
</dbReference>
<dbReference type="Gene3D" id="1.10.220.10">
    <property type="entry name" value="Annexin"/>
    <property type="match status" value="4"/>
</dbReference>
<dbReference type="InterPro" id="IPR008088">
    <property type="entry name" value="Alpha_giardin"/>
</dbReference>
<dbReference type="InterPro" id="IPR018502">
    <property type="entry name" value="Annexin_repeat"/>
</dbReference>
<dbReference type="InterPro" id="IPR037104">
    <property type="entry name" value="Annexin_sf"/>
</dbReference>
<dbReference type="PANTHER" id="PTHR10502">
    <property type="entry name" value="ANNEXIN"/>
    <property type="match status" value="1"/>
</dbReference>
<dbReference type="PANTHER" id="PTHR10502:SF102">
    <property type="entry name" value="ANNEXIN B11"/>
    <property type="match status" value="1"/>
</dbReference>
<dbReference type="Pfam" id="PF00191">
    <property type="entry name" value="Annexin"/>
    <property type="match status" value="1"/>
</dbReference>
<dbReference type="Pfam" id="PF22293">
    <property type="entry name" value="ANXE1_4th"/>
    <property type="match status" value="1"/>
</dbReference>
<dbReference type="PRINTS" id="PR01712">
    <property type="entry name" value="ALPHAGIARDIN"/>
</dbReference>
<dbReference type="SUPFAM" id="SSF47874">
    <property type="entry name" value="Annexin"/>
    <property type="match status" value="1"/>
</dbReference>
<dbReference type="PROSITE" id="PS51897">
    <property type="entry name" value="ANNEXIN_2"/>
    <property type="match status" value="4"/>
</dbReference>
<evidence type="ECO:0000250" key="1"/>
<evidence type="ECO:0000255" key="2">
    <source>
        <dbReference type="PROSITE-ProRule" id="PRU01245"/>
    </source>
</evidence>
<organism>
    <name type="scientific">Giardia intestinalis</name>
    <name type="common">Giardia lamblia</name>
    <dbReference type="NCBI Taxonomy" id="5741"/>
    <lineage>
        <taxon>Eukaryota</taxon>
        <taxon>Metamonada</taxon>
        <taxon>Diplomonadida</taxon>
        <taxon>Hexamitidae</taxon>
        <taxon>Giardiinae</taxon>
        <taxon>Giardia</taxon>
    </lineage>
</organism>